<protein>
    <recommendedName>
        <fullName>Heat shock 70 kDa protein</fullName>
    </recommendedName>
    <alternativeName>
        <fullName>HSP70</fullName>
    </alternativeName>
</protein>
<evidence type="ECO:0000256" key="1">
    <source>
        <dbReference type="SAM" id="MobiDB-lite"/>
    </source>
</evidence>
<evidence type="ECO:0000305" key="2"/>
<keyword id="KW-0067">ATP-binding</keyword>
<keyword id="KW-0143">Chaperone</keyword>
<keyword id="KW-0547">Nucleotide-binding</keyword>
<keyword id="KW-1185">Reference proteome</keyword>
<keyword id="KW-0346">Stress response</keyword>
<organism>
    <name type="scientific">Neurospora crassa (strain ATCC 24698 / 74-OR23-1A / CBS 708.71 / DSM 1257 / FGSC 987)</name>
    <dbReference type="NCBI Taxonomy" id="367110"/>
    <lineage>
        <taxon>Eukaryota</taxon>
        <taxon>Fungi</taxon>
        <taxon>Dikarya</taxon>
        <taxon>Ascomycota</taxon>
        <taxon>Pezizomycotina</taxon>
        <taxon>Sordariomycetes</taxon>
        <taxon>Sordariomycetidae</taxon>
        <taxon>Sordariales</taxon>
        <taxon>Sordariaceae</taxon>
        <taxon>Neurospora</taxon>
    </lineage>
</organism>
<accession>Q01233</accession>
<accession>Q7RVI8</accession>
<sequence>MAPAVGIDLGTTYSCVGVFREDRCEIIANDQGNRTTPSFVAFTDTERLVGDAAKNQVAMNPANTVFDAKRLIGRKFSDPEVQADMKHFPFKVIDRGGKPVIQVEFKGETKVFTPEEISAMILQKMKETAEAYLGGTVNNAVVTVPAYFNDSQRQATKDAGLIAGLNVLRIINEPTAAAIAYGLDKKVEGERNVLIFDLGGGTFDVSLLTIEEGIFEVKSTAGDTHLGGEDFDNRLVNHFVQEFKRKHKKDLSTNARALRRLRTACERAKRTLSSSAQTSIEIDSLFEGIDFYTSITRARFEELCQDLFRSTLQPVDRVLTDAKIDKSQVHEIVLVGGSTRIPRIQKLISDYFNGKEPNKSINPDEAVAYGAAVQAAILSGDTSSKSTSEILLLDVAPLSLGIETAGGMMTKLIPRNTTIPTKKSEVFSTFSDNQPGVLIQVYEGERQRTKDNNLLGKFELTGIPPAPRGVPQIEVTFDVDANGIMNVSALEKGTGKTNQITITNDKGRLSKEEIERMLAEAEKFKEEDEAEAKRVAAKNGLESYAYSLRNTLSDSKVDEKLDAADKEKLKSEIDKIVAWLDENQQATREEYEERQKELEAIANPIMMKFYGAGGAPGGMPGAAPGGFPGGAPGSNDNEGPTVEEVD</sequence>
<reference key="1">
    <citation type="journal article" date="1995" name="J. Bacteriol.">
        <title>The hsp70 gene family of Neurospora crassa: cloning, sequence analysis, expression, and genetic mapping of the major stress-inducible member.</title>
        <authorList>
            <person name="Kapoor M."/>
            <person name="Curle C.A."/>
            <person name="Runham C."/>
        </authorList>
    </citation>
    <scope>NUCLEOTIDE SEQUENCE [GENOMIC DNA]</scope>
</reference>
<reference key="2">
    <citation type="journal article" date="2003" name="Nucleic Acids Res.">
        <title>What's in the genome of a filamentous fungus? Analysis of the Neurospora genome sequence.</title>
        <authorList>
            <person name="Mannhaupt G."/>
            <person name="Montrone C."/>
            <person name="Haase D."/>
            <person name="Mewes H.-W."/>
            <person name="Aign V."/>
            <person name="Hoheisel J.D."/>
            <person name="Fartmann B."/>
            <person name="Nyakatura G."/>
            <person name="Kempken F."/>
            <person name="Maier J."/>
            <person name="Schulte U."/>
        </authorList>
    </citation>
    <scope>NUCLEOTIDE SEQUENCE [LARGE SCALE GENOMIC DNA]</scope>
    <source>
        <strain>ATCC 24698 / 74-OR23-1A / CBS 708.71 / DSM 1257 / FGSC 987</strain>
    </source>
</reference>
<reference key="3">
    <citation type="journal article" date="2003" name="Nature">
        <title>The genome sequence of the filamentous fungus Neurospora crassa.</title>
        <authorList>
            <person name="Galagan J.E."/>
            <person name="Calvo S.E."/>
            <person name="Borkovich K.A."/>
            <person name="Selker E.U."/>
            <person name="Read N.D."/>
            <person name="Jaffe D.B."/>
            <person name="FitzHugh W."/>
            <person name="Ma L.-J."/>
            <person name="Smirnov S."/>
            <person name="Purcell S."/>
            <person name="Rehman B."/>
            <person name="Elkins T."/>
            <person name="Engels R."/>
            <person name="Wang S."/>
            <person name="Nielsen C.B."/>
            <person name="Butler J."/>
            <person name="Endrizzi M."/>
            <person name="Qui D."/>
            <person name="Ianakiev P."/>
            <person name="Bell-Pedersen D."/>
            <person name="Nelson M.A."/>
            <person name="Werner-Washburne M."/>
            <person name="Selitrennikoff C.P."/>
            <person name="Kinsey J.A."/>
            <person name="Braun E.L."/>
            <person name="Zelter A."/>
            <person name="Schulte U."/>
            <person name="Kothe G.O."/>
            <person name="Jedd G."/>
            <person name="Mewes H.-W."/>
            <person name="Staben C."/>
            <person name="Marcotte E."/>
            <person name="Greenberg D."/>
            <person name="Roy A."/>
            <person name="Foley K."/>
            <person name="Naylor J."/>
            <person name="Stange-Thomann N."/>
            <person name="Barrett R."/>
            <person name="Gnerre S."/>
            <person name="Kamal M."/>
            <person name="Kamvysselis M."/>
            <person name="Mauceli E.W."/>
            <person name="Bielke C."/>
            <person name="Rudd S."/>
            <person name="Frishman D."/>
            <person name="Krystofova S."/>
            <person name="Rasmussen C."/>
            <person name="Metzenberg R.L."/>
            <person name="Perkins D.D."/>
            <person name="Kroken S."/>
            <person name="Cogoni C."/>
            <person name="Macino G."/>
            <person name="Catcheside D.E.A."/>
            <person name="Li W."/>
            <person name="Pratt R.J."/>
            <person name="Osmani S.A."/>
            <person name="DeSouza C.P.C."/>
            <person name="Glass N.L."/>
            <person name="Orbach M.J."/>
            <person name="Berglund J.A."/>
            <person name="Voelker R."/>
            <person name="Yarden O."/>
            <person name="Plamann M."/>
            <person name="Seiler S."/>
            <person name="Dunlap J.C."/>
            <person name="Radford A."/>
            <person name="Aramayo R."/>
            <person name="Natvig D.O."/>
            <person name="Alex L.A."/>
            <person name="Mannhaupt G."/>
            <person name="Ebbole D.J."/>
            <person name="Freitag M."/>
            <person name="Paulsen I."/>
            <person name="Sachs M.S."/>
            <person name="Lander E.S."/>
            <person name="Nusbaum C."/>
            <person name="Birren B.W."/>
        </authorList>
    </citation>
    <scope>NUCLEOTIDE SEQUENCE [LARGE SCALE GENOMIC DNA]</scope>
    <source>
        <strain>ATCC 24698 / 74-OR23-1A / CBS 708.71 / DSM 1257 / FGSC 987</strain>
    </source>
</reference>
<proteinExistence type="evidence at transcript level"/>
<name>HSP70_NEUCR</name>
<gene>
    <name type="primary">hsps-1</name>
    <name type="ORF">B18E6.040</name>
    <name type="ORF">NCU09602</name>
</gene>
<dbReference type="EMBL" id="U10443">
    <property type="protein sequence ID" value="AAA82183.1"/>
    <property type="molecule type" value="Genomic_DNA"/>
</dbReference>
<dbReference type="EMBL" id="BX284745">
    <property type="protein sequence ID" value="CAD70284.1"/>
    <property type="molecule type" value="Genomic_DNA"/>
</dbReference>
<dbReference type="EMBL" id="CM002237">
    <property type="protein sequence ID" value="EAA34130.1"/>
    <property type="molecule type" value="Genomic_DNA"/>
</dbReference>
<dbReference type="PIR" id="T46650">
    <property type="entry name" value="T46650"/>
</dbReference>
<dbReference type="RefSeq" id="XP_963366.1">
    <property type="nucleotide sequence ID" value="XM_958273.3"/>
</dbReference>
<dbReference type="SMR" id="Q01233"/>
<dbReference type="FunCoup" id="Q01233">
    <property type="interactions" value="1800"/>
</dbReference>
<dbReference type="IntAct" id="Q01233">
    <property type="interactions" value="1"/>
</dbReference>
<dbReference type="MINT" id="Q01233"/>
<dbReference type="STRING" id="367110.Q01233"/>
<dbReference type="PaxDb" id="5141-EFNCRP00000009412"/>
<dbReference type="EnsemblFungi" id="EAA34130">
    <property type="protein sequence ID" value="EAA34130"/>
    <property type="gene ID" value="NCU09602"/>
</dbReference>
<dbReference type="GeneID" id="3879515"/>
<dbReference type="KEGG" id="ncr:NCU09602"/>
<dbReference type="VEuPathDB" id="FungiDB:NCU09602"/>
<dbReference type="HOGENOM" id="CLU_005965_3_0_1"/>
<dbReference type="InParanoid" id="Q01233"/>
<dbReference type="OMA" id="AYTKNQD"/>
<dbReference type="OrthoDB" id="2401965at2759"/>
<dbReference type="Proteomes" id="UP000001805">
    <property type="component" value="Chromosome 6, Linkage Group II"/>
</dbReference>
<dbReference type="GO" id="GO:0005737">
    <property type="term" value="C:cytoplasm"/>
    <property type="evidence" value="ECO:0000318"/>
    <property type="project" value="GO_Central"/>
</dbReference>
<dbReference type="GO" id="GO:0005829">
    <property type="term" value="C:cytosol"/>
    <property type="evidence" value="ECO:0000318"/>
    <property type="project" value="GO_Central"/>
</dbReference>
<dbReference type="GO" id="GO:0005634">
    <property type="term" value="C:nucleus"/>
    <property type="evidence" value="ECO:0000318"/>
    <property type="project" value="GO_Central"/>
</dbReference>
<dbReference type="GO" id="GO:0005886">
    <property type="term" value="C:plasma membrane"/>
    <property type="evidence" value="ECO:0000318"/>
    <property type="project" value="GO_Central"/>
</dbReference>
<dbReference type="GO" id="GO:0005524">
    <property type="term" value="F:ATP binding"/>
    <property type="evidence" value="ECO:0007669"/>
    <property type="project" value="UniProtKB-KW"/>
</dbReference>
<dbReference type="GO" id="GO:0016887">
    <property type="term" value="F:ATP hydrolysis activity"/>
    <property type="evidence" value="ECO:0000318"/>
    <property type="project" value="GO_Central"/>
</dbReference>
<dbReference type="GO" id="GO:0140662">
    <property type="term" value="F:ATP-dependent protein folding chaperone"/>
    <property type="evidence" value="ECO:0007669"/>
    <property type="project" value="InterPro"/>
</dbReference>
<dbReference type="GO" id="GO:0031072">
    <property type="term" value="F:heat shock protein binding"/>
    <property type="evidence" value="ECO:0000318"/>
    <property type="project" value="GO_Central"/>
</dbReference>
<dbReference type="GO" id="GO:0044183">
    <property type="term" value="F:protein folding chaperone"/>
    <property type="evidence" value="ECO:0000318"/>
    <property type="project" value="GO_Central"/>
</dbReference>
<dbReference type="GO" id="GO:0051085">
    <property type="term" value="P:chaperone cofactor-dependent protein refolding"/>
    <property type="evidence" value="ECO:0000318"/>
    <property type="project" value="GO_Central"/>
</dbReference>
<dbReference type="GO" id="GO:0042026">
    <property type="term" value="P:protein refolding"/>
    <property type="evidence" value="ECO:0000318"/>
    <property type="project" value="GO_Central"/>
</dbReference>
<dbReference type="CDD" id="cd10233">
    <property type="entry name" value="ASKHA_NBD_HSP70_HSPA1"/>
    <property type="match status" value="1"/>
</dbReference>
<dbReference type="FunFam" id="2.60.34.10:FF:000002">
    <property type="entry name" value="Heat shock 70 kDa"/>
    <property type="match status" value="1"/>
</dbReference>
<dbReference type="FunFam" id="3.90.640.10:FF:000002">
    <property type="entry name" value="Heat shock 70 kDa"/>
    <property type="match status" value="1"/>
</dbReference>
<dbReference type="FunFam" id="3.30.420.40:FF:000172">
    <property type="entry name" value="Heat shock 70 kDa protein"/>
    <property type="match status" value="2"/>
</dbReference>
<dbReference type="FunFam" id="3.30.30.30:FF:000001">
    <property type="entry name" value="heat shock 70 kDa protein-like"/>
    <property type="match status" value="1"/>
</dbReference>
<dbReference type="FunFam" id="3.30.420.40:FF:000028">
    <property type="entry name" value="heat shock 70 kDa protein-like"/>
    <property type="match status" value="1"/>
</dbReference>
<dbReference type="FunFam" id="1.20.1270.10:FF:000021">
    <property type="entry name" value="Heat shock protein 70"/>
    <property type="match status" value="1"/>
</dbReference>
<dbReference type="FunFam" id="3.30.420.40:FF:000026">
    <property type="entry name" value="Heat shock protein 70"/>
    <property type="match status" value="1"/>
</dbReference>
<dbReference type="Gene3D" id="1.20.1270.10">
    <property type="match status" value="1"/>
</dbReference>
<dbReference type="Gene3D" id="3.30.30.30">
    <property type="match status" value="1"/>
</dbReference>
<dbReference type="Gene3D" id="3.30.420.40">
    <property type="match status" value="2"/>
</dbReference>
<dbReference type="Gene3D" id="3.90.640.10">
    <property type="entry name" value="Actin, Chain A, domain 4"/>
    <property type="match status" value="1"/>
</dbReference>
<dbReference type="Gene3D" id="2.60.34.10">
    <property type="entry name" value="Substrate Binding Domain Of DNAk, Chain A, domain 1"/>
    <property type="match status" value="1"/>
</dbReference>
<dbReference type="InterPro" id="IPR043129">
    <property type="entry name" value="ATPase_NBD"/>
</dbReference>
<dbReference type="InterPro" id="IPR018181">
    <property type="entry name" value="Heat_shock_70_CS"/>
</dbReference>
<dbReference type="InterPro" id="IPR029048">
    <property type="entry name" value="HSP70_C_sf"/>
</dbReference>
<dbReference type="InterPro" id="IPR029047">
    <property type="entry name" value="HSP70_peptide-bd_sf"/>
</dbReference>
<dbReference type="InterPro" id="IPR013126">
    <property type="entry name" value="Hsp_70_fam"/>
</dbReference>
<dbReference type="NCBIfam" id="NF001413">
    <property type="entry name" value="PRK00290.1"/>
    <property type="match status" value="1"/>
</dbReference>
<dbReference type="PANTHER" id="PTHR19375">
    <property type="entry name" value="HEAT SHOCK PROTEIN 70KDA"/>
    <property type="match status" value="1"/>
</dbReference>
<dbReference type="Pfam" id="PF00012">
    <property type="entry name" value="HSP70"/>
    <property type="match status" value="1"/>
</dbReference>
<dbReference type="PRINTS" id="PR00301">
    <property type="entry name" value="HEATSHOCK70"/>
</dbReference>
<dbReference type="SUPFAM" id="SSF53067">
    <property type="entry name" value="Actin-like ATPase domain"/>
    <property type="match status" value="2"/>
</dbReference>
<dbReference type="SUPFAM" id="SSF100934">
    <property type="entry name" value="Heat shock protein 70kD (HSP70), C-terminal subdomain"/>
    <property type="match status" value="1"/>
</dbReference>
<dbReference type="SUPFAM" id="SSF100920">
    <property type="entry name" value="Heat shock protein 70kD (HSP70), peptide-binding domain"/>
    <property type="match status" value="1"/>
</dbReference>
<dbReference type="PROSITE" id="PS00297">
    <property type="entry name" value="HSP70_1"/>
    <property type="match status" value="1"/>
</dbReference>
<dbReference type="PROSITE" id="PS00329">
    <property type="entry name" value="HSP70_2"/>
    <property type="match status" value="1"/>
</dbReference>
<dbReference type="PROSITE" id="PS01036">
    <property type="entry name" value="HSP70_3"/>
    <property type="match status" value="1"/>
</dbReference>
<feature type="chain" id="PRO_0000078372" description="Heat shock 70 kDa protein">
    <location>
        <begin position="1"/>
        <end position="646"/>
    </location>
</feature>
<feature type="region of interest" description="Disordered" evidence="1">
    <location>
        <begin position="613"/>
        <end position="646"/>
    </location>
</feature>
<feature type="compositionally biased region" description="Gly residues" evidence="1">
    <location>
        <begin position="613"/>
        <end position="632"/>
    </location>
</feature>
<feature type="sequence conflict" description="In Ref. 1; AAA82183." evidence="2" ref="1">
    <original>H</original>
    <variation>D</variation>
    <location>
        <position position="247"/>
    </location>
</feature>
<feature type="sequence conflict" description="In Ref. 1; AAA82183." evidence="2" ref="1">
    <original>N</original>
    <variation>D</variation>
    <location>
        <position position="353"/>
    </location>
</feature>
<feature type="sequence conflict" description="In Ref. 1; AAA82183." evidence="2" ref="1">
    <original>S</original>
    <variation>R</variation>
    <location>
        <position position="360"/>
    </location>
</feature>
<comment type="induction">
    <text>By heat shock.</text>
</comment>
<comment type="similarity">
    <text evidence="2">Belongs to the heat shock protein 70 family.</text>
</comment>